<sequence length="151" mass="17356">MKVILKETIDTLGIVGTEWDVAPGYARNYLFPQGKAIEATPQNRKIIQQAKAKFDLQIAKERKLAQEMAERLKNVECTIKAKVHEEFRLYGSITSHDIKDALNAQNIILERRTILLPEPIRETGEYKVPIRLYKDVEPEITVKVVPEEKTQ</sequence>
<gene>
    <name evidence="1" type="primary">rplI</name>
    <name type="ordered locus">HRM2_18610</name>
</gene>
<reference key="1">
    <citation type="journal article" date="2009" name="Environ. Microbiol.">
        <title>Genome sequence of Desulfobacterium autotrophicum HRM2, a marine sulfate reducer oxidizing organic carbon completely to carbon dioxide.</title>
        <authorList>
            <person name="Strittmatter A.W."/>
            <person name="Liesegang H."/>
            <person name="Rabus R."/>
            <person name="Decker I."/>
            <person name="Amann J."/>
            <person name="Andres S."/>
            <person name="Henne A."/>
            <person name="Fricke W.F."/>
            <person name="Martinez-Arias R."/>
            <person name="Bartels D."/>
            <person name="Goesmann A."/>
            <person name="Krause L."/>
            <person name="Puehler A."/>
            <person name="Klenk H.P."/>
            <person name="Richter M."/>
            <person name="Schuler M."/>
            <person name="Gloeckner F.O."/>
            <person name="Meyerdierks A."/>
            <person name="Gottschalk G."/>
            <person name="Amann R."/>
        </authorList>
    </citation>
    <scope>NUCLEOTIDE SEQUENCE [LARGE SCALE GENOMIC DNA]</scope>
    <source>
        <strain>ATCC 43914 / DSM 3382 / VKM B-1955 / HRM2</strain>
    </source>
</reference>
<organism>
    <name type="scientific">Desulforapulum autotrophicum (strain ATCC 43914 / DSM 3382 / VKM B-1955 / HRM2)</name>
    <name type="common">Desulfobacterium autotrophicum</name>
    <dbReference type="NCBI Taxonomy" id="177437"/>
    <lineage>
        <taxon>Bacteria</taxon>
        <taxon>Pseudomonadati</taxon>
        <taxon>Thermodesulfobacteriota</taxon>
        <taxon>Desulfobacteria</taxon>
        <taxon>Desulfobacterales</taxon>
        <taxon>Desulfobacteraceae</taxon>
        <taxon>Desulforapulum</taxon>
    </lineage>
</organism>
<dbReference type="EMBL" id="CP001087">
    <property type="protein sequence ID" value="ACN14963.1"/>
    <property type="molecule type" value="Genomic_DNA"/>
</dbReference>
<dbReference type="RefSeq" id="WP_015903749.1">
    <property type="nucleotide sequence ID" value="NC_012108.1"/>
</dbReference>
<dbReference type="SMR" id="C0QBV1"/>
<dbReference type="STRING" id="177437.HRM2_18610"/>
<dbReference type="KEGG" id="dat:HRM2_18610"/>
<dbReference type="eggNOG" id="COG0359">
    <property type="taxonomic scope" value="Bacteria"/>
</dbReference>
<dbReference type="HOGENOM" id="CLU_078938_3_0_7"/>
<dbReference type="OrthoDB" id="9788336at2"/>
<dbReference type="Proteomes" id="UP000000442">
    <property type="component" value="Chromosome"/>
</dbReference>
<dbReference type="GO" id="GO:1990904">
    <property type="term" value="C:ribonucleoprotein complex"/>
    <property type="evidence" value="ECO:0007669"/>
    <property type="project" value="UniProtKB-KW"/>
</dbReference>
<dbReference type="GO" id="GO:0005840">
    <property type="term" value="C:ribosome"/>
    <property type="evidence" value="ECO:0007669"/>
    <property type="project" value="UniProtKB-KW"/>
</dbReference>
<dbReference type="GO" id="GO:0019843">
    <property type="term" value="F:rRNA binding"/>
    <property type="evidence" value="ECO:0007669"/>
    <property type="project" value="UniProtKB-UniRule"/>
</dbReference>
<dbReference type="GO" id="GO:0003735">
    <property type="term" value="F:structural constituent of ribosome"/>
    <property type="evidence" value="ECO:0007669"/>
    <property type="project" value="InterPro"/>
</dbReference>
<dbReference type="GO" id="GO:0006412">
    <property type="term" value="P:translation"/>
    <property type="evidence" value="ECO:0007669"/>
    <property type="project" value="UniProtKB-UniRule"/>
</dbReference>
<dbReference type="Gene3D" id="3.10.430.100">
    <property type="entry name" value="Ribosomal protein L9, C-terminal domain"/>
    <property type="match status" value="1"/>
</dbReference>
<dbReference type="Gene3D" id="3.40.5.10">
    <property type="entry name" value="Ribosomal protein L9, N-terminal domain"/>
    <property type="match status" value="1"/>
</dbReference>
<dbReference type="HAMAP" id="MF_00503">
    <property type="entry name" value="Ribosomal_bL9"/>
    <property type="match status" value="1"/>
</dbReference>
<dbReference type="InterPro" id="IPR000244">
    <property type="entry name" value="Ribosomal_bL9"/>
</dbReference>
<dbReference type="InterPro" id="IPR009027">
    <property type="entry name" value="Ribosomal_bL9/RNase_H1_N"/>
</dbReference>
<dbReference type="InterPro" id="IPR020594">
    <property type="entry name" value="Ribosomal_bL9_bac/chp"/>
</dbReference>
<dbReference type="InterPro" id="IPR020069">
    <property type="entry name" value="Ribosomal_bL9_C"/>
</dbReference>
<dbReference type="InterPro" id="IPR036791">
    <property type="entry name" value="Ribosomal_bL9_C_sf"/>
</dbReference>
<dbReference type="InterPro" id="IPR020070">
    <property type="entry name" value="Ribosomal_bL9_N"/>
</dbReference>
<dbReference type="InterPro" id="IPR036935">
    <property type="entry name" value="Ribosomal_bL9_N_sf"/>
</dbReference>
<dbReference type="NCBIfam" id="TIGR00158">
    <property type="entry name" value="L9"/>
    <property type="match status" value="1"/>
</dbReference>
<dbReference type="PANTHER" id="PTHR21368">
    <property type="entry name" value="50S RIBOSOMAL PROTEIN L9"/>
    <property type="match status" value="1"/>
</dbReference>
<dbReference type="Pfam" id="PF03948">
    <property type="entry name" value="Ribosomal_L9_C"/>
    <property type="match status" value="1"/>
</dbReference>
<dbReference type="Pfam" id="PF01281">
    <property type="entry name" value="Ribosomal_L9_N"/>
    <property type="match status" value="1"/>
</dbReference>
<dbReference type="SUPFAM" id="SSF55658">
    <property type="entry name" value="L9 N-domain-like"/>
    <property type="match status" value="1"/>
</dbReference>
<dbReference type="SUPFAM" id="SSF55653">
    <property type="entry name" value="Ribosomal protein L9 C-domain"/>
    <property type="match status" value="1"/>
</dbReference>
<dbReference type="PROSITE" id="PS00651">
    <property type="entry name" value="RIBOSOMAL_L9"/>
    <property type="match status" value="1"/>
</dbReference>
<comment type="function">
    <text evidence="1">Binds to the 23S rRNA.</text>
</comment>
<comment type="similarity">
    <text evidence="1">Belongs to the bacterial ribosomal protein bL9 family.</text>
</comment>
<keyword id="KW-1185">Reference proteome</keyword>
<keyword id="KW-0687">Ribonucleoprotein</keyword>
<keyword id="KW-0689">Ribosomal protein</keyword>
<keyword id="KW-0694">RNA-binding</keyword>
<keyword id="KW-0699">rRNA-binding</keyword>
<feature type="chain" id="PRO_1000206543" description="Large ribosomal subunit protein bL9">
    <location>
        <begin position="1"/>
        <end position="151"/>
    </location>
</feature>
<accession>C0QBV1</accession>
<protein>
    <recommendedName>
        <fullName evidence="1">Large ribosomal subunit protein bL9</fullName>
    </recommendedName>
    <alternativeName>
        <fullName evidence="2">50S ribosomal protein L9</fullName>
    </alternativeName>
</protein>
<evidence type="ECO:0000255" key="1">
    <source>
        <dbReference type="HAMAP-Rule" id="MF_00503"/>
    </source>
</evidence>
<evidence type="ECO:0000305" key="2"/>
<name>RL9_DESAH</name>
<proteinExistence type="inferred from homology"/>